<dbReference type="EC" id="3.2.1.17"/>
<dbReference type="EMBL" id="M34780">
    <property type="protein sequence ID" value="AAA72845.1"/>
    <property type="molecule type" value="Genomic_DNA"/>
</dbReference>
<dbReference type="PIR" id="JQ0438">
    <property type="entry name" value="MUBPC9"/>
</dbReference>
<dbReference type="SMR" id="P19386"/>
<dbReference type="CAZy" id="GH25">
    <property type="family name" value="Glycoside Hydrolase Family 25"/>
</dbReference>
<dbReference type="GO" id="GO:0003796">
    <property type="term" value="F:lysozyme activity"/>
    <property type="evidence" value="ECO:0007669"/>
    <property type="project" value="UniProtKB-EC"/>
</dbReference>
<dbReference type="GO" id="GO:0016998">
    <property type="term" value="P:cell wall macromolecule catabolic process"/>
    <property type="evidence" value="ECO:0007669"/>
    <property type="project" value="InterPro"/>
</dbReference>
<dbReference type="GO" id="GO:0042742">
    <property type="term" value="P:defense response to bacterium"/>
    <property type="evidence" value="ECO:0007669"/>
    <property type="project" value="UniProtKB-KW"/>
</dbReference>
<dbReference type="GO" id="GO:0031640">
    <property type="term" value="P:killing of cells of another organism"/>
    <property type="evidence" value="ECO:0007669"/>
    <property type="project" value="UniProtKB-KW"/>
</dbReference>
<dbReference type="GO" id="GO:0009253">
    <property type="term" value="P:peptidoglycan catabolic process"/>
    <property type="evidence" value="ECO:0007669"/>
    <property type="project" value="InterPro"/>
</dbReference>
<dbReference type="CDD" id="cd06415">
    <property type="entry name" value="GH25_Cpl1-like"/>
    <property type="match status" value="1"/>
</dbReference>
<dbReference type="FunFam" id="2.20.120.10:FF:000001">
    <property type="entry name" value="Lysozyme"/>
    <property type="match status" value="1"/>
</dbReference>
<dbReference type="FunFam" id="3.20.20.80:FF:000229">
    <property type="entry name" value="Lysozyme"/>
    <property type="match status" value="1"/>
</dbReference>
<dbReference type="Gene3D" id="2.10.270.10">
    <property type="entry name" value="Cholin Binding"/>
    <property type="match status" value="1"/>
</dbReference>
<dbReference type="Gene3D" id="3.20.20.80">
    <property type="entry name" value="Glycosidases"/>
    <property type="match status" value="1"/>
</dbReference>
<dbReference type="Gene3D" id="2.20.120.10">
    <property type="entry name" value="Multimodular pneumococcal cell wall endolysin, domain 3"/>
    <property type="match status" value="1"/>
</dbReference>
<dbReference type="InterPro" id="IPR018337">
    <property type="entry name" value="Cell_wall/Cho-bd_repeat"/>
</dbReference>
<dbReference type="InterPro" id="IPR002053">
    <property type="entry name" value="Glyco_hydro_25"/>
</dbReference>
<dbReference type="InterPro" id="IPR008270">
    <property type="entry name" value="Glyco_hydro_25_AS"/>
</dbReference>
<dbReference type="InterPro" id="IPR018077">
    <property type="entry name" value="Glyco_hydro_fam25_subgr"/>
</dbReference>
<dbReference type="InterPro" id="IPR017853">
    <property type="entry name" value="Glycoside_hydrolase_SF"/>
</dbReference>
<dbReference type="Pfam" id="PF01473">
    <property type="entry name" value="Choline_bind_1"/>
    <property type="match status" value="2"/>
</dbReference>
<dbReference type="Pfam" id="PF19127">
    <property type="entry name" value="Choline_bind_3"/>
    <property type="match status" value="1"/>
</dbReference>
<dbReference type="Pfam" id="PF01183">
    <property type="entry name" value="Glyco_hydro_25"/>
    <property type="match status" value="1"/>
</dbReference>
<dbReference type="SMART" id="SM00641">
    <property type="entry name" value="Glyco_25"/>
    <property type="match status" value="1"/>
</dbReference>
<dbReference type="SUPFAM" id="SSF51445">
    <property type="entry name" value="(Trans)glycosidases"/>
    <property type="match status" value="1"/>
</dbReference>
<dbReference type="SUPFAM" id="SSF69360">
    <property type="entry name" value="Cell wall binding repeat"/>
    <property type="match status" value="1"/>
</dbReference>
<dbReference type="PROSITE" id="PS51170">
    <property type="entry name" value="CW"/>
    <property type="match status" value="5"/>
</dbReference>
<dbReference type="PROSITE" id="PS00953">
    <property type="entry name" value="GLYCOSYL_HYDROL_F25_1"/>
    <property type="match status" value="1"/>
</dbReference>
<dbReference type="PROSITE" id="PS51904">
    <property type="entry name" value="GLYCOSYL_HYDROL_F25_2"/>
    <property type="match status" value="1"/>
</dbReference>
<proteinExistence type="inferred from homology"/>
<feature type="chain" id="PRO_0000208261" description="Lysozyme">
    <location>
        <begin position="1"/>
        <end position="339"/>
    </location>
</feature>
<feature type="domain" description="Ch-type lysozyme" evidence="2">
    <location>
        <begin position="5"/>
        <end position="201"/>
    </location>
</feature>
<feature type="repeat" description="Cell wall-binding 1">
    <location>
        <begin position="200"/>
        <end position="219"/>
    </location>
</feature>
<feature type="repeat" description="Cell wall-binding 2">
    <location>
        <begin position="220"/>
        <end position="239"/>
    </location>
</feature>
<feature type="repeat" description="Cell wall-binding 3">
    <location>
        <begin position="241"/>
        <end position="260"/>
    </location>
</feature>
<feature type="repeat" description="Cell wall-binding 4">
    <location>
        <begin position="261"/>
        <end position="280"/>
    </location>
</feature>
<feature type="repeat" description="Cell wall-binding 5">
    <location>
        <begin position="281"/>
        <end position="300"/>
    </location>
</feature>
<feature type="repeat" description="Cell wall-binding 6">
    <location>
        <begin position="303"/>
        <end position="322"/>
    </location>
</feature>
<feature type="active site" evidence="2">
    <location>
        <position position="10"/>
    </location>
</feature>
<feature type="active site" evidence="2">
    <location>
        <position position="92"/>
    </location>
</feature>
<feature type="active site" evidence="2">
    <location>
        <position position="94"/>
    </location>
</feature>
<gene>
    <name type="primary">CPL9</name>
</gene>
<reference key="1">
    <citation type="journal article" date="1990" name="Gene">
        <title>Modular organization of the lytic enzymes of Streptococcus pneumoniae and its bacteriophages.</title>
        <authorList>
            <person name="Garcia P."/>
            <person name="Garcia J.L."/>
            <person name="Garcia E."/>
            <person name="Sanchez-Puelles J.M."/>
            <person name="Lopez R."/>
        </authorList>
    </citation>
    <scope>NUCLEOTIDE SEQUENCE [GENOMIC DNA]</scope>
</reference>
<organismHost>
    <name type="scientific">Streptococcus pneumoniae</name>
    <dbReference type="NCBI Taxonomy" id="1313"/>
</organismHost>
<name>LYS_BPCP9</name>
<organism>
    <name type="scientific">Streptococcus phage Cp-9</name>
    <name type="common">Bacteriophage Cp-9</name>
    <dbReference type="NCBI Taxonomy" id="10749"/>
    <lineage>
        <taxon>Viruses</taxon>
        <taxon>Duplodnaviria</taxon>
        <taxon>Heunggongvirae</taxon>
        <taxon>Uroviricota</taxon>
        <taxon>Caudoviricetes</taxon>
        <taxon>Salasmaviridae</taxon>
        <taxon>Cepunavirus</taxon>
        <taxon>Cepunavirus Cp1</taxon>
    </lineage>
</organism>
<comment type="function">
    <text>Responsible for the separation of the host daughter cells at the end of cell division and participates in the liberation of progeny bacteriophage into the medium. Strictly depends on the presence of choline-containing cell walls for activity.</text>
</comment>
<comment type="catalytic activity">
    <reaction>
        <text>Hydrolysis of (1-&gt;4)-beta-linkages between N-acetylmuramic acid and N-acetyl-D-glucosamine residues in a peptidoglycan and between N-acetyl-D-glucosamine residues in chitodextrins.</text>
        <dbReference type="EC" id="3.2.1.17"/>
    </reaction>
</comment>
<comment type="domain">
    <text evidence="1">The C-terminal domain comprising the repeats is involved in choline binding.</text>
</comment>
<comment type="similarity">
    <text evidence="2 3">Belongs to the glycosyl hydrolase 25 family.</text>
</comment>
<keyword id="KW-0929">Antimicrobial</keyword>
<keyword id="KW-0081">Bacteriolytic enzyme</keyword>
<keyword id="KW-0326">Glycosidase</keyword>
<keyword id="KW-0378">Hydrolase</keyword>
<keyword id="KW-0677">Repeat</keyword>
<evidence type="ECO:0000250" key="1"/>
<evidence type="ECO:0000255" key="2">
    <source>
        <dbReference type="PROSITE-ProRule" id="PRU01252"/>
    </source>
</evidence>
<evidence type="ECO:0000305" key="3"/>
<sequence>MVKKNDLFIDVSSHNGYDITGILEQMGTTNTIVKISESTTYLNPCLSAQVEQSTPIGFYHFARFGGDVAEAEREAQFFLDNVPTQVKYLVLDYEDDPSGNAQANTNACLRFMQMIADAGYTPIYYSYKPFTLDNVDYQQILAQFPNSLWIAGYGLNDGNADFEYFPSMDGIRWWQYSSNPFDKNIVLLDDEEDEKPKTAGTWKQDSKGWWFRRNNGSFPYNKWEKIGGVWYYFDSKGYCLTSEWLKDNEKWYYLKDNGAMVTGWVLVGSEWYYMDDSGAMVTGWVKYKNNWYYMTNERGNMVSNEFIKSGKGWYFMNTNGELADNPSFTKEPDGLITVA</sequence>
<protein>
    <recommendedName>
        <fullName>Lysozyme</fullName>
        <ecNumber>3.2.1.17</ecNumber>
    </recommendedName>
    <alternativeName>
        <fullName>CP-9 lysin</fullName>
    </alternativeName>
    <alternativeName>
        <fullName>Endolysin</fullName>
    </alternativeName>
    <alternativeName>
        <fullName>Muramidase</fullName>
    </alternativeName>
</protein>
<accession>P19386</accession>